<protein>
    <recommendedName>
        <fullName evidence="1">Pyridoxal phosphate homeostasis protein</fullName>
        <shortName evidence="1">PLP homeostasis protein</shortName>
    </recommendedName>
</protein>
<organism>
    <name type="scientific">Haemophilus influenzae (strain ATCC 51907 / DSM 11121 / KW20 / Rd)</name>
    <dbReference type="NCBI Taxonomy" id="71421"/>
    <lineage>
        <taxon>Bacteria</taxon>
        <taxon>Pseudomonadati</taxon>
        <taxon>Pseudomonadota</taxon>
        <taxon>Gammaproteobacteria</taxon>
        <taxon>Pasteurellales</taxon>
        <taxon>Pasteurellaceae</taxon>
        <taxon>Haemophilus</taxon>
    </lineage>
</organism>
<name>PLPHP_HAEIN</name>
<proteinExistence type="evidence at protein level"/>
<gene>
    <name type="ordered locus">HI_0090</name>
</gene>
<sequence>MNIQHNLNLIQQKIETACKEENRNQNTVKLLAVSKTKPISAILSAYQAGQTAFGENYVQEGVEKIQYFESQGINLEWHFIGPLQSNKTRLVAEHFDWMQTLDRAKIADRLNEQRPTNKAPLNVLIQINISDEESKSGIQPEEMLTLAKHIENLPHLCLRGLMAIPAPTDNIAEQENAFRKMLELFEQLKQVLPNQQIDTLSMGMTDDMPSAIKCGSTMVRIGTAIFGARNYSTSQNK</sequence>
<accession>P44506</accession>
<reference key="1">
    <citation type="journal article" date="1995" name="Science">
        <title>Whole-genome random sequencing and assembly of Haemophilus influenzae Rd.</title>
        <authorList>
            <person name="Fleischmann R.D."/>
            <person name="Adams M.D."/>
            <person name="White O."/>
            <person name="Clayton R.A."/>
            <person name="Kirkness E.F."/>
            <person name="Kerlavage A.R."/>
            <person name="Bult C.J."/>
            <person name="Tomb J.-F."/>
            <person name="Dougherty B.A."/>
            <person name="Merrick J.M."/>
            <person name="McKenney K."/>
            <person name="Sutton G.G."/>
            <person name="FitzHugh W."/>
            <person name="Fields C.A."/>
            <person name="Gocayne J.D."/>
            <person name="Scott J.D."/>
            <person name="Shirley R."/>
            <person name="Liu L.-I."/>
            <person name="Glodek A."/>
            <person name="Kelley J.M."/>
            <person name="Weidman J.F."/>
            <person name="Phillips C.A."/>
            <person name="Spriggs T."/>
            <person name="Hedblom E."/>
            <person name="Cotton M.D."/>
            <person name="Utterback T.R."/>
            <person name="Hanna M.C."/>
            <person name="Nguyen D.T."/>
            <person name="Saudek D.M."/>
            <person name="Brandon R.C."/>
            <person name="Fine L.D."/>
            <person name="Fritchman J.L."/>
            <person name="Fuhrmann J.L."/>
            <person name="Geoghagen N.S.M."/>
            <person name="Gnehm C.L."/>
            <person name="McDonald L.A."/>
            <person name="Small K.V."/>
            <person name="Fraser C.M."/>
            <person name="Smith H.O."/>
            <person name="Venter J.C."/>
        </authorList>
    </citation>
    <scope>NUCLEOTIDE SEQUENCE [LARGE SCALE GENOMIC DNA]</scope>
    <source>
        <strain>ATCC 51907 / DSM 11121 / KW20 / Rd</strain>
    </source>
</reference>
<reference key="2">
    <citation type="journal article" date="2000" name="Electrophoresis">
        <title>Two-dimensional map of the proteome of Haemophilus influenzae.</title>
        <authorList>
            <person name="Langen H."/>
            <person name="Takacs B."/>
            <person name="Evers S."/>
            <person name="Berndt P."/>
            <person name="Lahm H.W."/>
            <person name="Wipf B."/>
            <person name="Gray C."/>
            <person name="Fountoulakis M."/>
        </authorList>
    </citation>
    <scope>IDENTIFICATION BY MASS SPECTROMETRY</scope>
    <source>
        <strain>ATCC 51907 / DSM 11121 / KW20 / Rd</strain>
    </source>
</reference>
<evidence type="ECO:0000255" key="1">
    <source>
        <dbReference type="HAMAP-Rule" id="MF_02087"/>
    </source>
</evidence>
<comment type="function">
    <text evidence="1">Pyridoxal 5'-phosphate (PLP)-binding protein, which is involved in PLP homeostasis.</text>
</comment>
<comment type="similarity">
    <text evidence="1">Belongs to the pyridoxal phosphate-binding protein YggS/PROSC family.</text>
</comment>
<feature type="chain" id="PRO_0000163199" description="Pyridoxal phosphate homeostasis protein">
    <location>
        <begin position="1"/>
        <end position="237"/>
    </location>
</feature>
<feature type="modified residue" description="N6-(pyridoxal phosphate)lysine" evidence="1">
    <location>
        <position position="35"/>
    </location>
</feature>
<dbReference type="EMBL" id="L42023">
    <property type="protein sequence ID" value="AAC21768.1"/>
    <property type="molecule type" value="Genomic_DNA"/>
</dbReference>
<dbReference type="PIR" id="B64142">
    <property type="entry name" value="B64142"/>
</dbReference>
<dbReference type="RefSeq" id="NP_438263.1">
    <property type="nucleotide sequence ID" value="NC_000907.1"/>
</dbReference>
<dbReference type="SMR" id="P44506"/>
<dbReference type="STRING" id="71421.HI_0090"/>
<dbReference type="EnsemblBacteria" id="AAC21768">
    <property type="protein sequence ID" value="AAC21768"/>
    <property type="gene ID" value="HI_0090"/>
</dbReference>
<dbReference type="KEGG" id="hin:HI_0090"/>
<dbReference type="PATRIC" id="fig|71421.8.peg.91"/>
<dbReference type="eggNOG" id="COG0325">
    <property type="taxonomic scope" value="Bacteria"/>
</dbReference>
<dbReference type="HOGENOM" id="CLU_059988_0_1_6"/>
<dbReference type="OrthoDB" id="9804072at2"/>
<dbReference type="PhylomeDB" id="P44506"/>
<dbReference type="BioCyc" id="HINF71421:G1GJ1-95-MONOMER"/>
<dbReference type="Proteomes" id="UP000000579">
    <property type="component" value="Chromosome"/>
</dbReference>
<dbReference type="GO" id="GO:0005737">
    <property type="term" value="C:cytoplasm"/>
    <property type="evidence" value="ECO:0000318"/>
    <property type="project" value="GO_Central"/>
</dbReference>
<dbReference type="GO" id="GO:0030170">
    <property type="term" value="F:pyridoxal phosphate binding"/>
    <property type="evidence" value="ECO:0000318"/>
    <property type="project" value="GO_Central"/>
</dbReference>
<dbReference type="CDD" id="cd06824">
    <property type="entry name" value="PLPDE_III_Yggs_like"/>
    <property type="match status" value="1"/>
</dbReference>
<dbReference type="FunFam" id="3.20.20.10:FF:000004">
    <property type="entry name" value="Pyridoxal phosphate homeostasis protein"/>
    <property type="match status" value="1"/>
</dbReference>
<dbReference type="Gene3D" id="3.20.20.10">
    <property type="entry name" value="Alanine racemase"/>
    <property type="match status" value="1"/>
</dbReference>
<dbReference type="HAMAP" id="MF_02087">
    <property type="entry name" value="PLP_homeostasis"/>
    <property type="match status" value="1"/>
</dbReference>
<dbReference type="InterPro" id="IPR001608">
    <property type="entry name" value="Ala_racemase_N"/>
</dbReference>
<dbReference type="InterPro" id="IPR029066">
    <property type="entry name" value="PLP-binding_barrel"/>
</dbReference>
<dbReference type="InterPro" id="IPR011078">
    <property type="entry name" value="PyrdxlP_homeostasis"/>
</dbReference>
<dbReference type="NCBIfam" id="TIGR00044">
    <property type="entry name" value="YggS family pyridoxal phosphate-dependent enzyme"/>
    <property type="match status" value="1"/>
</dbReference>
<dbReference type="PANTHER" id="PTHR10146">
    <property type="entry name" value="PROLINE SYNTHETASE CO-TRANSCRIBED BACTERIAL HOMOLOG PROTEIN"/>
    <property type="match status" value="1"/>
</dbReference>
<dbReference type="PANTHER" id="PTHR10146:SF14">
    <property type="entry name" value="PYRIDOXAL PHOSPHATE HOMEOSTASIS PROTEIN"/>
    <property type="match status" value="1"/>
</dbReference>
<dbReference type="Pfam" id="PF01168">
    <property type="entry name" value="Ala_racemase_N"/>
    <property type="match status" value="1"/>
</dbReference>
<dbReference type="PIRSF" id="PIRSF004848">
    <property type="entry name" value="YBL036c_PLPDEIII"/>
    <property type="match status" value="1"/>
</dbReference>
<dbReference type="SUPFAM" id="SSF51419">
    <property type="entry name" value="PLP-binding barrel"/>
    <property type="match status" value="1"/>
</dbReference>
<dbReference type="PROSITE" id="PS01211">
    <property type="entry name" value="UPF0001"/>
    <property type="match status" value="1"/>
</dbReference>
<keyword id="KW-0663">Pyridoxal phosphate</keyword>
<keyword id="KW-1185">Reference proteome</keyword>